<keyword id="KW-0025">Alternative splicing</keyword>
<keyword id="KW-1185">Reference proteome</keyword>
<comment type="alternative products">
    <event type="alternative splicing"/>
    <isoform>
        <id>Q3SY05-1</id>
        <name>1</name>
        <sequence type="displayed"/>
    </isoform>
    <isoform>
        <id>Q3SY05-2</id>
        <name>2</name>
        <sequence type="described" ref="VSP_019954"/>
    </isoform>
</comment>
<comment type="caution">
    <text evidence="3">Product of a dubious CDS prediction. May be a non-coding RNA.</text>
</comment>
<sequence length="128" mass="14562">MYKSWTLGDPKEKEGVGNILEETKRTQNNTEQASRAINSPLQSPYTDSMKALAISSHWFLPQIHTLPPITKATRHRWPPACCGRRGGQTTLPPLTPIVRACESMERSCPGNYPMQHERKVMQRHPTLR</sequence>
<evidence type="ECO:0000256" key="1">
    <source>
        <dbReference type="SAM" id="MobiDB-lite"/>
    </source>
</evidence>
<evidence type="ECO:0000303" key="2">
    <source>
    </source>
</evidence>
<evidence type="ECO:0000305" key="3"/>
<feature type="chain" id="PRO_0000247232" description="Putative uncharacterized protein encoded by LINC00303">
    <location>
        <begin position="1"/>
        <end position="128"/>
    </location>
</feature>
<feature type="region of interest" description="Disordered" evidence="1">
    <location>
        <begin position="24"/>
        <end position="43"/>
    </location>
</feature>
<feature type="compositionally biased region" description="Polar residues" evidence="1">
    <location>
        <begin position="26"/>
        <end position="43"/>
    </location>
</feature>
<feature type="splice variant" id="VSP_019954" description="In isoform 2." evidence="2">
    <original>CESMERSCPGNYPMQHERKVMQRHPTLR</original>
    <variation>SNTQ</variation>
    <location>
        <begin position="101"/>
        <end position="128"/>
    </location>
</feature>
<feature type="sequence variant" id="VAR_047356" description="In dbSNP:rs4951039.">
    <original>V</original>
    <variation>A</variation>
    <location>
        <position position="98"/>
    </location>
</feature>
<feature type="sequence conflict" description="In Ref. 1; BAC05136." evidence="3" ref="1">
    <original>P</original>
    <variation>L</variation>
    <location>
        <position position="10"/>
    </location>
</feature>
<feature type="sequence conflict" description="In Ref. 1; BAC05136 and 3; AAI04011/AAI04013." evidence="3" ref="1 3">
    <original>R</original>
    <variation>G</variation>
    <location>
        <position position="118"/>
    </location>
</feature>
<dbReference type="EMBL" id="AK097662">
    <property type="protein sequence ID" value="BAC05136.1"/>
    <property type="molecule type" value="mRNA"/>
</dbReference>
<dbReference type="EMBL" id="AC096645">
    <property type="status" value="NOT_ANNOTATED_CDS"/>
    <property type="molecule type" value="Genomic_DNA"/>
</dbReference>
<dbReference type="EMBL" id="BC104010">
    <property type="protein sequence ID" value="AAI04011.1"/>
    <property type="molecule type" value="mRNA"/>
</dbReference>
<dbReference type="EMBL" id="BC104011">
    <property type="protein sequence ID" value="AAI04012.1"/>
    <property type="molecule type" value="mRNA"/>
</dbReference>
<dbReference type="EMBL" id="BC104012">
    <property type="protein sequence ID" value="AAI04013.1"/>
    <property type="molecule type" value="mRNA"/>
</dbReference>
<dbReference type="SMR" id="Q3SY05"/>
<dbReference type="BioMuta" id="HGNC:26865"/>
<dbReference type="MassIVE" id="Q3SY05"/>
<dbReference type="AGR" id="HGNC:26865"/>
<dbReference type="GeneCards" id="LINC00303"/>
<dbReference type="HGNC" id="HGNC:26865">
    <property type="gene designation" value="LINC00303"/>
</dbReference>
<dbReference type="neXtProt" id="NX_Q3SY05"/>
<dbReference type="InParanoid" id="Q3SY05"/>
<dbReference type="PAN-GO" id="Q3SY05">
    <property type="GO annotations" value="0 GO annotations based on evolutionary models"/>
</dbReference>
<dbReference type="PathwayCommons" id="Q3SY05"/>
<dbReference type="Pharos" id="Q3SY05">
    <property type="development level" value="Tdark"/>
</dbReference>
<dbReference type="Proteomes" id="UP000005640">
    <property type="component" value="Unplaced"/>
</dbReference>
<dbReference type="RNAct" id="Q3SY05">
    <property type="molecule type" value="protein"/>
</dbReference>
<accession>Q3SY05</accession>
<accession>Q3SY06</accession>
<accession>Q8N7U1</accession>
<protein>
    <recommendedName>
        <fullName>Putative uncharacterized protein encoded by LINC00303</fullName>
    </recommendedName>
</protein>
<reference key="1">
    <citation type="journal article" date="2004" name="Nat. Genet.">
        <title>Complete sequencing and characterization of 21,243 full-length human cDNAs.</title>
        <authorList>
            <person name="Ota T."/>
            <person name="Suzuki Y."/>
            <person name="Nishikawa T."/>
            <person name="Otsuki T."/>
            <person name="Sugiyama T."/>
            <person name="Irie R."/>
            <person name="Wakamatsu A."/>
            <person name="Hayashi K."/>
            <person name="Sato H."/>
            <person name="Nagai K."/>
            <person name="Kimura K."/>
            <person name="Makita H."/>
            <person name="Sekine M."/>
            <person name="Obayashi M."/>
            <person name="Nishi T."/>
            <person name="Shibahara T."/>
            <person name="Tanaka T."/>
            <person name="Ishii S."/>
            <person name="Yamamoto J."/>
            <person name="Saito K."/>
            <person name="Kawai Y."/>
            <person name="Isono Y."/>
            <person name="Nakamura Y."/>
            <person name="Nagahari K."/>
            <person name="Murakami K."/>
            <person name="Yasuda T."/>
            <person name="Iwayanagi T."/>
            <person name="Wagatsuma M."/>
            <person name="Shiratori A."/>
            <person name="Sudo H."/>
            <person name="Hosoiri T."/>
            <person name="Kaku Y."/>
            <person name="Kodaira H."/>
            <person name="Kondo H."/>
            <person name="Sugawara M."/>
            <person name="Takahashi M."/>
            <person name="Kanda K."/>
            <person name="Yokoi T."/>
            <person name="Furuya T."/>
            <person name="Kikkawa E."/>
            <person name="Omura Y."/>
            <person name="Abe K."/>
            <person name="Kamihara K."/>
            <person name="Katsuta N."/>
            <person name="Sato K."/>
            <person name="Tanikawa M."/>
            <person name="Yamazaki M."/>
            <person name="Ninomiya K."/>
            <person name="Ishibashi T."/>
            <person name="Yamashita H."/>
            <person name="Murakawa K."/>
            <person name="Fujimori K."/>
            <person name="Tanai H."/>
            <person name="Kimata M."/>
            <person name="Watanabe M."/>
            <person name="Hiraoka S."/>
            <person name="Chiba Y."/>
            <person name="Ishida S."/>
            <person name="Ono Y."/>
            <person name="Takiguchi S."/>
            <person name="Watanabe S."/>
            <person name="Yosida M."/>
            <person name="Hotuta T."/>
            <person name="Kusano J."/>
            <person name="Kanehori K."/>
            <person name="Takahashi-Fujii A."/>
            <person name="Hara H."/>
            <person name="Tanase T.-O."/>
            <person name="Nomura Y."/>
            <person name="Togiya S."/>
            <person name="Komai F."/>
            <person name="Hara R."/>
            <person name="Takeuchi K."/>
            <person name="Arita M."/>
            <person name="Imose N."/>
            <person name="Musashino K."/>
            <person name="Yuuki H."/>
            <person name="Oshima A."/>
            <person name="Sasaki N."/>
            <person name="Aotsuka S."/>
            <person name="Yoshikawa Y."/>
            <person name="Matsunawa H."/>
            <person name="Ichihara T."/>
            <person name="Shiohata N."/>
            <person name="Sano S."/>
            <person name="Moriya S."/>
            <person name="Momiyama H."/>
            <person name="Satoh N."/>
            <person name="Takami S."/>
            <person name="Terashima Y."/>
            <person name="Suzuki O."/>
            <person name="Nakagawa S."/>
            <person name="Senoh A."/>
            <person name="Mizoguchi H."/>
            <person name="Goto Y."/>
            <person name="Shimizu F."/>
            <person name="Wakebe H."/>
            <person name="Hishigaki H."/>
            <person name="Watanabe T."/>
            <person name="Sugiyama A."/>
            <person name="Takemoto M."/>
            <person name="Kawakami B."/>
            <person name="Yamazaki M."/>
            <person name="Watanabe K."/>
            <person name="Kumagai A."/>
            <person name="Itakura S."/>
            <person name="Fukuzumi Y."/>
            <person name="Fujimori Y."/>
            <person name="Komiyama M."/>
            <person name="Tashiro H."/>
            <person name="Tanigami A."/>
            <person name="Fujiwara T."/>
            <person name="Ono T."/>
            <person name="Yamada K."/>
            <person name="Fujii Y."/>
            <person name="Ozaki K."/>
            <person name="Hirao M."/>
            <person name="Ohmori Y."/>
            <person name="Kawabata A."/>
            <person name="Hikiji T."/>
            <person name="Kobatake N."/>
            <person name="Inagaki H."/>
            <person name="Ikema Y."/>
            <person name="Okamoto S."/>
            <person name="Okitani R."/>
            <person name="Kawakami T."/>
            <person name="Noguchi S."/>
            <person name="Itoh T."/>
            <person name="Shigeta K."/>
            <person name="Senba T."/>
            <person name="Matsumura K."/>
            <person name="Nakajima Y."/>
            <person name="Mizuno T."/>
            <person name="Morinaga M."/>
            <person name="Sasaki M."/>
            <person name="Togashi T."/>
            <person name="Oyama M."/>
            <person name="Hata H."/>
            <person name="Watanabe M."/>
            <person name="Komatsu T."/>
            <person name="Mizushima-Sugano J."/>
            <person name="Satoh T."/>
            <person name="Shirai Y."/>
            <person name="Takahashi Y."/>
            <person name="Nakagawa K."/>
            <person name="Okumura K."/>
            <person name="Nagase T."/>
            <person name="Nomura N."/>
            <person name="Kikuchi H."/>
            <person name="Masuho Y."/>
            <person name="Yamashita R."/>
            <person name="Nakai K."/>
            <person name="Yada T."/>
            <person name="Nakamura Y."/>
            <person name="Ohara O."/>
            <person name="Isogai T."/>
            <person name="Sugano S."/>
        </authorList>
    </citation>
    <scope>NUCLEOTIDE SEQUENCE [LARGE SCALE MRNA] (ISOFORM 1)</scope>
    <source>
        <tissue>Testis</tissue>
    </source>
</reference>
<reference key="2">
    <citation type="journal article" date="2006" name="Nature">
        <title>The DNA sequence and biological annotation of human chromosome 1.</title>
        <authorList>
            <person name="Gregory S.G."/>
            <person name="Barlow K.F."/>
            <person name="McLay K.E."/>
            <person name="Kaul R."/>
            <person name="Swarbreck D."/>
            <person name="Dunham A."/>
            <person name="Scott C.E."/>
            <person name="Howe K.L."/>
            <person name="Woodfine K."/>
            <person name="Spencer C.C.A."/>
            <person name="Jones M.C."/>
            <person name="Gillson C."/>
            <person name="Searle S."/>
            <person name="Zhou Y."/>
            <person name="Kokocinski F."/>
            <person name="McDonald L."/>
            <person name="Evans R."/>
            <person name="Phillips K."/>
            <person name="Atkinson A."/>
            <person name="Cooper R."/>
            <person name="Jones C."/>
            <person name="Hall R.E."/>
            <person name="Andrews T.D."/>
            <person name="Lloyd C."/>
            <person name="Ainscough R."/>
            <person name="Almeida J.P."/>
            <person name="Ambrose K.D."/>
            <person name="Anderson F."/>
            <person name="Andrew R.W."/>
            <person name="Ashwell R.I.S."/>
            <person name="Aubin K."/>
            <person name="Babbage A.K."/>
            <person name="Bagguley C.L."/>
            <person name="Bailey J."/>
            <person name="Beasley H."/>
            <person name="Bethel G."/>
            <person name="Bird C.P."/>
            <person name="Bray-Allen S."/>
            <person name="Brown J.Y."/>
            <person name="Brown A.J."/>
            <person name="Buckley D."/>
            <person name="Burton J."/>
            <person name="Bye J."/>
            <person name="Carder C."/>
            <person name="Chapman J.C."/>
            <person name="Clark S.Y."/>
            <person name="Clarke G."/>
            <person name="Clee C."/>
            <person name="Cobley V."/>
            <person name="Collier R.E."/>
            <person name="Corby N."/>
            <person name="Coville G.J."/>
            <person name="Davies J."/>
            <person name="Deadman R."/>
            <person name="Dunn M."/>
            <person name="Earthrowl M."/>
            <person name="Ellington A.G."/>
            <person name="Errington H."/>
            <person name="Frankish A."/>
            <person name="Frankland J."/>
            <person name="French L."/>
            <person name="Garner P."/>
            <person name="Garnett J."/>
            <person name="Gay L."/>
            <person name="Ghori M.R.J."/>
            <person name="Gibson R."/>
            <person name="Gilby L.M."/>
            <person name="Gillett W."/>
            <person name="Glithero R.J."/>
            <person name="Grafham D.V."/>
            <person name="Griffiths C."/>
            <person name="Griffiths-Jones S."/>
            <person name="Grocock R."/>
            <person name="Hammond S."/>
            <person name="Harrison E.S.I."/>
            <person name="Hart E."/>
            <person name="Haugen E."/>
            <person name="Heath P.D."/>
            <person name="Holmes S."/>
            <person name="Holt K."/>
            <person name="Howden P.J."/>
            <person name="Hunt A.R."/>
            <person name="Hunt S.E."/>
            <person name="Hunter G."/>
            <person name="Isherwood J."/>
            <person name="James R."/>
            <person name="Johnson C."/>
            <person name="Johnson D."/>
            <person name="Joy A."/>
            <person name="Kay M."/>
            <person name="Kershaw J.K."/>
            <person name="Kibukawa M."/>
            <person name="Kimberley A.M."/>
            <person name="King A."/>
            <person name="Knights A.J."/>
            <person name="Lad H."/>
            <person name="Laird G."/>
            <person name="Lawlor S."/>
            <person name="Leongamornlert D.A."/>
            <person name="Lloyd D.M."/>
            <person name="Loveland J."/>
            <person name="Lovell J."/>
            <person name="Lush M.J."/>
            <person name="Lyne R."/>
            <person name="Martin S."/>
            <person name="Mashreghi-Mohammadi M."/>
            <person name="Matthews L."/>
            <person name="Matthews N.S.W."/>
            <person name="McLaren S."/>
            <person name="Milne S."/>
            <person name="Mistry S."/>
            <person name="Moore M.J.F."/>
            <person name="Nickerson T."/>
            <person name="O'Dell C.N."/>
            <person name="Oliver K."/>
            <person name="Palmeiri A."/>
            <person name="Palmer S.A."/>
            <person name="Parker A."/>
            <person name="Patel D."/>
            <person name="Pearce A.V."/>
            <person name="Peck A.I."/>
            <person name="Pelan S."/>
            <person name="Phelps K."/>
            <person name="Phillimore B.J."/>
            <person name="Plumb R."/>
            <person name="Rajan J."/>
            <person name="Raymond C."/>
            <person name="Rouse G."/>
            <person name="Saenphimmachak C."/>
            <person name="Sehra H.K."/>
            <person name="Sheridan E."/>
            <person name="Shownkeen R."/>
            <person name="Sims S."/>
            <person name="Skuce C.D."/>
            <person name="Smith M."/>
            <person name="Steward C."/>
            <person name="Subramanian S."/>
            <person name="Sycamore N."/>
            <person name="Tracey A."/>
            <person name="Tromans A."/>
            <person name="Van Helmond Z."/>
            <person name="Wall M."/>
            <person name="Wallis J.M."/>
            <person name="White S."/>
            <person name="Whitehead S.L."/>
            <person name="Wilkinson J.E."/>
            <person name="Willey D.L."/>
            <person name="Williams H."/>
            <person name="Wilming L."/>
            <person name="Wray P.W."/>
            <person name="Wu Z."/>
            <person name="Coulson A."/>
            <person name="Vaudin M."/>
            <person name="Sulston J.E."/>
            <person name="Durbin R.M."/>
            <person name="Hubbard T."/>
            <person name="Wooster R."/>
            <person name="Dunham I."/>
            <person name="Carter N.P."/>
            <person name="McVean G."/>
            <person name="Ross M.T."/>
            <person name="Harrow J."/>
            <person name="Olson M.V."/>
            <person name="Beck S."/>
            <person name="Rogers J."/>
            <person name="Bentley D.R."/>
        </authorList>
    </citation>
    <scope>NUCLEOTIDE SEQUENCE [LARGE SCALE GENOMIC DNA]</scope>
</reference>
<reference key="3">
    <citation type="journal article" date="2004" name="Genome Res.">
        <title>The status, quality, and expansion of the NIH full-length cDNA project: the Mammalian Gene Collection (MGC).</title>
        <authorList>
            <consortium name="The MGC Project Team"/>
        </authorList>
    </citation>
    <scope>NUCLEOTIDE SEQUENCE [LARGE SCALE MRNA] (ISOFORMS 1 AND 2)</scope>
</reference>
<name>CA157_HUMAN</name>
<gene>
    <name type="primary">LINC00303</name>
    <name type="synonym">C1orf157</name>
    <name type="synonym">NCRNA00303</name>
</gene>
<proteinExistence type="uncertain"/>
<organism>
    <name type="scientific">Homo sapiens</name>
    <name type="common">Human</name>
    <dbReference type="NCBI Taxonomy" id="9606"/>
    <lineage>
        <taxon>Eukaryota</taxon>
        <taxon>Metazoa</taxon>
        <taxon>Chordata</taxon>
        <taxon>Craniata</taxon>
        <taxon>Vertebrata</taxon>
        <taxon>Euteleostomi</taxon>
        <taxon>Mammalia</taxon>
        <taxon>Eutheria</taxon>
        <taxon>Euarchontoglires</taxon>
        <taxon>Primates</taxon>
        <taxon>Haplorrhini</taxon>
        <taxon>Catarrhini</taxon>
        <taxon>Hominidae</taxon>
        <taxon>Homo</taxon>
    </lineage>
</organism>